<gene>
    <name evidence="1" type="primary">thrB</name>
    <name type="ordered locus">LS215_0195</name>
</gene>
<sequence>MECKRARAYSSSANLGSGFDILSMAHTAFFDTVEICVETKNSENIVIESNSKIPLEPNRNSATYPLVRIMEERGIKASLRVKVIKGIPEGLGLGSSGASATAAVMAFSSLFNLNLSKEDLVRYAMYGEIASSGSPHPDNVAASVFGGVVSVVSVNPVKVVEIPLNYSFNILLFVPLNVHIEEKTKKAREMVPKTVKLSDYINNSRYISSLLIGFVKGERDLIRLGLNDEIVEKARLPLFPYYPKIKEIAIKYDAVGSCVSGAGPSILVLTDKMTDENKIAEEGTKTCNEFNVECEVIKAKIAGGVEVERRN</sequence>
<name>KHSE_SACI2</name>
<organism>
    <name type="scientific">Saccharolobus islandicus (strain L.S.2.15 / Lassen #1)</name>
    <name type="common">Sulfolobus islandicus</name>
    <dbReference type="NCBI Taxonomy" id="429572"/>
    <lineage>
        <taxon>Archaea</taxon>
        <taxon>Thermoproteota</taxon>
        <taxon>Thermoprotei</taxon>
        <taxon>Sulfolobales</taxon>
        <taxon>Sulfolobaceae</taxon>
        <taxon>Saccharolobus</taxon>
    </lineage>
</organism>
<reference key="1">
    <citation type="journal article" date="2009" name="Proc. Natl. Acad. Sci. U.S.A.">
        <title>Biogeography of the Sulfolobus islandicus pan-genome.</title>
        <authorList>
            <person name="Reno M.L."/>
            <person name="Held N.L."/>
            <person name="Fields C.J."/>
            <person name="Burke P.V."/>
            <person name="Whitaker R.J."/>
        </authorList>
    </citation>
    <scope>NUCLEOTIDE SEQUENCE [LARGE SCALE GENOMIC DNA]</scope>
    <source>
        <strain>L.S.2.15 / Lassen #1</strain>
    </source>
</reference>
<comment type="function">
    <text evidence="1">Catalyzes the ATP-dependent phosphorylation of L-homoserine to L-homoserine phosphate.</text>
</comment>
<comment type="catalytic activity">
    <reaction evidence="1">
        <text>L-homoserine + ATP = O-phospho-L-homoserine + ADP + H(+)</text>
        <dbReference type="Rhea" id="RHEA:13985"/>
        <dbReference type="ChEBI" id="CHEBI:15378"/>
        <dbReference type="ChEBI" id="CHEBI:30616"/>
        <dbReference type="ChEBI" id="CHEBI:57476"/>
        <dbReference type="ChEBI" id="CHEBI:57590"/>
        <dbReference type="ChEBI" id="CHEBI:456216"/>
        <dbReference type="EC" id="2.7.1.39"/>
    </reaction>
</comment>
<comment type="pathway">
    <text evidence="1">Amino-acid biosynthesis; L-threonine biosynthesis; L-threonine from L-aspartate: step 4/5.</text>
</comment>
<comment type="subcellular location">
    <subcellularLocation>
        <location evidence="1">Cytoplasm</location>
    </subcellularLocation>
</comment>
<comment type="similarity">
    <text evidence="1">Belongs to the GHMP kinase family. Homoserine kinase subfamily.</text>
</comment>
<evidence type="ECO:0000255" key="1">
    <source>
        <dbReference type="HAMAP-Rule" id="MF_00384"/>
    </source>
</evidence>
<keyword id="KW-0028">Amino-acid biosynthesis</keyword>
<keyword id="KW-0067">ATP-binding</keyword>
<keyword id="KW-0963">Cytoplasm</keyword>
<keyword id="KW-0418">Kinase</keyword>
<keyword id="KW-0547">Nucleotide-binding</keyword>
<keyword id="KW-0791">Threonine biosynthesis</keyword>
<keyword id="KW-0808">Transferase</keyword>
<protein>
    <recommendedName>
        <fullName evidence="1">Homoserine kinase</fullName>
        <shortName evidence="1">HK</shortName>
        <shortName evidence="1">HSK</shortName>
        <ecNumber evidence="1">2.7.1.39</ecNumber>
    </recommendedName>
</protein>
<accession>C3MK52</accession>
<dbReference type="EC" id="2.7.1.39" evidence="1"/>
<dbReference type="EMBL" id="CP001399">
    <property type="protein sequence ID" value="ACP34350.1"/>
    <property type="molecule type" value="Genomic_DNA"/>
</dbReference>
<dbReference type="RefSeq" id="WP_012710342.1">
    <property type="nucleotide sequence ID" value="NC_012589.1"/>
</dbReference>
<dbReference type="SMR" id="C3MK52"/>
<dbReference type="KEGG" id="sis:LS215_0195"/>
<dbReference type="HOGENOM" id="CLU_041243_1_1_2"/>
<dbReference type="OrthoDB" id="28273at2157"/>
<dbReference type="UniPathway" id="UPA00050">
    <property type="reaction ID" value="UER00064"/>
</dbReference>
<dbReference type="Proteomes" id="UP000001747">
    <property type="component" value="Chromosome"/>
</dbReference>
<dbReference type="GO" id="GO:0005737">
    <property type="term" value="C:cytoplasm"/>
    <property type="evidence" value="ECO:0007669"/>
    <property type="project" value="UniProtKB-SubCell"/>
</dbReference>
<dbReference type="GO" id="GO:0005524">
    <property type="term" value="F:ATP binding"/>
    <property type="evidence" value="ECO:0007669"/>
    <property type="project" value="UniProtKB-UniRule"/>
</dbReference>
<dbReference type="GO" id="GO:0004413">
    <property type="term" value="F:homoserine kinase activity"/>
    <property type="evidence" value="ECO:0007669"/>
    <property type="project" value="UniProtKB-UniRule"/>
</dbReference>
<dbReference type="GO" id="GO:0009088">
    <property type="term" value="P:threonine biosynthetic process"/>
    <property type="evidence" value="ECO:0007669"/>
    <property type="project" value="UniProtKB-UniRule"/>
</dbReference>
<dbReference type="Gene3D" id="3.30.230.10">
    <property type="match status" value="1"/>
</dbReference>
<dbReference type="Gene3D" id="3.30.70.890">
    <property type="entry name" value="GHMP kinase, C-terminal domain"/>
    <property type="match status" value="1"/>
</dbReference>
<dbReference type="HAMAP" id="MF_00384">
    <property type="entry name" value="Homoser_kinase"/>
    <property type="match status" value="1"/>
</dbReference>
<dbReference type="InterPro" id="IPR013750">
    <property type="entry name" value="GHMP_kinase_C_dom"/>
</dbReference>
<dbReference type="InterPro" id="IPR036554">
    <property type="entry name" value="GHMP_kinase_C_sf"/>
</dbReference>
<dbReference type="InterPro" id="IPR006204">
    <property type="entry name" value="GHMP_kinase_N_dom"/>
</dbReference>
<dbReference type="InterPro" id="IPR006203">
    <property type="entry name" value="GHMP_knse_ATP-bd_CS"/>
</dbReference>
<dbReference type="InterPro" id="IPR000870">
    <property type="entry name" value="Homoserine_kinase"/>
</dbReference>
<dbReference type="InterPro" id="IPR020568">
    <property type="entry name" value="Ribosomal_Su5_D2-typ_SF"/>
</dbReference>
<dbReference type="InterPro" id="IPR014721">
    <property type="entry name" value="Ribsml_uS5_D2-typ_fold_subgr"/>
</dbReference>
<dbReference type="NCBIfam" id="NF002288">
    <property type="entry name" value="PRK01212.1-4"/>
    <property type="match status" value="1"/>
</dbReference>
<dbReference type="NCBIfam" id="TIGR00191">
    <property type="entry name" value="thrB"/>
    <property type="match status" value="1"/>
</dbReference>
<dbReference type="PANTHER" id="PTHR20861:SF1">
    <property type="entry name" value="HOMOSERINE KINASE"/>
    <property type="match status" value="1"/>
</dbReference>
<dbReference type="PANTHER" id="PTHR20861">
    <property type="entry name" value="HOMOSERINE/4-DIPHOSPHOCYTIDYL-2-C-METHYL-D-ERYTHRITOL KINASE"/>
    <property type="match status" value="1"/>
</dbReference>
<dbReference type="Pfam" id="PF08544">
    <property type="entry name" value="GHMP_kinases_C"/>
    <property type="match status" value="1"/>
</dbReference>
<dbReference type="Pfam" id="PF00288">
    <property type="entry name" value="GHMP_kinases_N"/>
    <property type="match status" value="1"/>
</dbReference>
<dbReference type="PIRSF" id="PIRSF000676">
    <property type="entry name" value="Homoser_kin"/>
    <property type="match status" value="1"/>
</dbReference>
<dbReference type="PRINTS" id="PR00958">
    <property type="entry name" value="HOMSERKINASE"/>
</dbReference>
<dbReference type="SUPFAM" id="SSF55060">
    <property type="entry name" value="GHMP Kinase, C-terminal domain"/>
    <property type="match status" value="1"/>
</dbReference>
<dbReference type="SUPFAM" id="SSF54211">
    <property type="entry name" value="Ribosomal protein S5 domain 2-like"/>
    <property type="match status" value="1"/>
</dbReference>
<dbReference type="PROSITE" id="PS00627">
    <property type="entry name" value="GHMP_KINASES_ATP"/>
    <property type="match status" value="1"/>
</dbReference>
<feature type="chain" id="PRO_1000205743" description="Homoserine kinase">
    <location>
        <begin position="1"/>
        <end position="311"/>
    </location>
</feature>
<feature type="binding site" evidence="1">
    <location>
        <begin position="88"/>
        <end position="98"/>
    </location>
    <ligand>
        <name>ATP</name>
        <dbReference type="ChEBI" id="CHEBI:30616"/>
    </ligand>
</feature>
<proteinExistence type="inferred from homology"/>